<dbReference type="EC" id="7.2.2.6" evidence="1"/>
<dbReference type="EMBL" id="FM200053">
    <property type="protein sequence ID" value="CAR60096.1"/>
    <property type="molecule type" value="Genomic_DNA"/>
</dbReference>
<dbReference type="RefSeq" id="WP_000088032.1">
    <property type="nucleotide sequence ID" value="NC_011147.1"/>
</dbReference>
<dbReference type="SMR" id="B5BCA4"/>
<dbReference type="KEGG" id="sek:SSPA1897"/>
<dbReference type="HOGENOM" id="CLU_025728_2_0_6"/>
<dbReference type="Proteomes" id="UP000001869">
    <property type="component" value="Chromosome"/>
</dbReference>
<dbReference type="GO" id="GO:0005886">
    <property type="term" value="C:plasma membrane"/>
    <property type="evidence" value="ECO:0007669"/>
    <property type="project" value="UniProtKB-SubCell"/>
</dbReference>
<dbReference type="GO" id="GO:0005524">
    <property type="term" value="F:ATP binding"/>
    <property type="evidence" value="ECO:0007669"/>
    <property type="project" value="UniProtKB-UniRule"/>
</dbReference>
<dbReference type="GO" id="GO:0016887">
    <property type="term" value="F:ATP hydrolysis activity"/>
    <property type="evidence" value="ECO:0007669"/>
    <property type="project" value="InterPro"/>
</dbReference>
<dbReference type="GO" id="GO:0000287">
    <property type="term" value="F:magnesium ion binding"/>
    <property type="evidence" value="ECO:0007669"/>
    <property type="project" value="UniProtKB-UniRule"/>
</dbReference>
<dbReference type="GO" id="GO:0008556">
    <property type="term" value="F:P-type potassium transmembrane transporter activity"/>
    <property type="evidence" value="ECO:0007669"/>
    <property type="project" value="UniProtKB-UniRule"/>
</dbReference>
<dbReference type="CDD" id="cd02078">
    <property type="entry name" value="P-type_ATPase_K"/>
    <property type="match status" value="1"/>
</dbReference>
<dbReference type="FunFam" id="2.70.150.10:FF:000010">
    <property type="entry name" value="Potassium-transporting ATPase ATP-binding subunit"/>
    <property type="match status" value="1"/>
</dbReference>
<dbReference type="FunFam" id="3.40.1110.10:FF:000007">
    <property type="entry name" value="Potassium-transporting ATPase ATP-binding subunit"/>
    <property type="match status" value="1"/>
</dbReference>
<dbReference type="Gene3D" id="3.40.1110.10">
    <property type="entry name" value="Calcium-transporting ATPase, cytoplasmic domain N"/>
    <property type="match status" value="1"/>
</dbReference>
<dbReference type="Gene3D" id="2.70.150.10">
    <property type="entry name" value="Calcium-transporting ATPase, cytoplasmic transduction domain A"/>
    <property type="match status" value="1"/>
</dbReference>
<dbReference type="Gene3D" id="3.40.50.1000">
    <property type="entry name" value="HAD superfamily/HAD-like"/>
    <property type="match status" value="1"/>
</dbReference>
<dbReference type="HAMAP" id="MF_00285">
    <property type="entry name" value="KdpB"/>
    <property type="match status" value="1"/>
</dbReference>
<dbReference type="InterPro" id="IPR023299">
    <property type="entry name" value="ATPase_P-typ_cyto_dom_N"/>
</dbReference>
<dbReference type="InterPro" id="IPR018303">
    <property type="entry name" value="ATPase_P-typ_P_site"/>
</dbReference>
<dbReference type="InterPro" id="IPR023298">
    <property type="entry name" value="ATPase_P-typ_TM_dom_sf"/>
</dbReference>
<dbReference type="InterPro" id="IPR008250">
    <property type="entry name" value="ATPase_P-typ_transduc_dom_A_sf"/>
</dbReference>
<dbReference type="InterPro" id="IPR036412">
    <property type="entry name" value="HAD-like_sf"/>
</dbReference>
<dbReference type="InterPro" id="IPR023214">
    <property type="entry name" value="HAD_sf"/>
</dbReference>
<dbReference type="InterPro" id="IPR006391">
    <property type="entry name" value="P-type_ATPase_bsu_IA"/>
</dbReference>
<dbReference type="InterPro" id="IPR001757">
    <property type="entry name" value="P_typ_ATPase"/>
</dbReference>
<dbReference type="InterPro" id="IPR044492">
    <property type="entry name" value="P_typ_ATPase_HD_dom"/>
</dbReference>
<dbReference type="NCBIfam" id="TIGR01494">
    <property type="entry name" value="ATPase_P-type"/>
    <property type="match status" value="2"/>
</dbReference>
<dbReference type="NCBIfam" id="TIGR01497">
    <property type="entry name" value="kdpB"/>
    <property type="match status" value="1"/>
</dbReference>
<dbReference type="PANTHER" id="PTHR43743">
    <property type="entry name" value="POTASSIUM-TRANSPORTING ATPASE ATP-BINDING SUBUNIT"/>
    <property type="match status" value="1"/>
</dbReference>
<dbReference type="PANTHER" id="PTHR43743:SF1">
    <property type="entry name" value="POTASSIUM-TRANSPORTING ATPASE ATP-BINDING SUBUNIT"/>
    <property type="match status" value="1"/>
</dbReference>
<dbReference type="Pfam" id="PF00122">
    <property type="entry name" value="E1-E2_ATPase"/>
    <property type="match status" value="1"/>
</dbReference>
<dbReference type="Pfam" id="PF00702">
    <property type="entry name" value="Hydrolase"/>
    <property type="match status" value="1"/>
</dbReference>
<dbReference type="PRINTS" id="PR00119">
    <property type="entry name" value="CATATPASE"/>
</dbReference>
<dbReference type="SFLD" id="SFLDG00002">
    <property type="entry name" value="C1.7:_P-type_atpase_like"/>
    <property type="match status" value="1"/>
</dbReference>
<dbReference type="SFLD" id="SFLDF00027">
    <property type="entry name" value="p-type_atpase"/>
    <property type="match status" value="1"/>
</dbReference>
<dbReference type="SUPFAM" id="SSF81653">
    <property type="entry name" value="Calcium ATPase, transduction domain A"/>
    <property type="match status" value="1"/>
</dbReference>
<dbReference type="SUPFAM" id="SSF81665">
    <property type="entry name" value="Calcium ATPase, transmembrane domain M"/>
    <property type="match status" value="1"/>
</dbReference>
<dbReference type="SUPFAM" id="SSF56784">
    <property type="entry name" value="HAD-like"/>
    <property type="match status" value="1"/>
</dbReference>
<dbReference type="SUPFAM" id="SSF81660">
    <property type="entry name" value="Metal cation-transporting ATPase, ATP-binding domain N"/>
    <property type="match status" value="1"/>
</dbReference>
<dbReference type="PROSITE" id="PS00154">
    <property type="entry name" value="ATPASE_E1_E2"/>
    <property type="match status" value="1"/>
</dbReference>
<organism>
    <name type="scientific">Salmonella paratyphi A (strain AKU_12601)</name>
    <dbReference type="NCBI Taxonomy" id="554290"/>
    <lineage>
        <taxon>Bacteria</taxon>
        <taxon>Pseudomonadati</taxon>
        <taxon>Pseudomonadota</taxon>
        <taxon>Gammaproteobacteria</taxon>
        <taxon>Enterobacterales</taxon>
        <taxon>Enterobacteriaceae</taxon>
        <taxon>Salmonella</taxon>
    </lineage>
</organism>
<gene>
    <name evidence="1" type="primary">kdpB</name>
    <name type="ordered locus">SSPA1897</name>
</gene>
<keyword id="KW-0067">ATP-binding</keyword>
<keyword id="KW-0997">Cell inner membrane</keyword>
<keyword id="KW-1003">Cell membrane</keyword>
<keyword id="KW-0406">Ion transport</keyword>
<keyword id="KW-0460">Magnesium</keyword>
<keyword id="KW-0472">Membrane</keyword>
<keyword id="KW-0479">Metal-binding</keyword>
<keyword id="KW-0547">Nucleotide-binding</keyword>
<keyword id="KW-0597">Phosphoprotein</keyword>
<keyword id="KW-0630">Potassium</keyword>
<keyword id="KW-0633">Potassium transport</keyword>
<keyword id="KW-1278">Translocase</keyword>
<keyword id="KW-0812">Transmembrane</keyword>
<keyword id="KW-1133">Transmembrane helix</keyword>
<keyword id="KW-0813">Transport</keyword>
<accession>B5BCA4</accession>
<reference key="1">
    <citation type="journal article" date="2009" name="BMC Genomics">
        <title>Pseudogene accumulation in the evolutionary histories of Salmonella enterica serovars Paratyphi A and Typhi.</title>
        <authorList>
            <person name="Holt K.E."/>
            <person name="Thomson N.R."/>
            <person name="Wain J."/>
            <person name="Langridge G.C."/>
            <person name="Hasan R."/>
            <person name="Bhutta Z.A."/>
            <person name="Quail M.A."/>
            <person name="Norbertczak H."/>
            <person name="Walker D."/>
            <person name="Simmonds M."/>
            <person name="White B."/>
            <person name="Bason N."/>
            <person name="Mungall K."/>
            <person name="Dougan G."/>
            <person name="Parkhill J."/>
        </authorList>
    </citation>
    <scope>NUCLEOTIDE SEQUENCE [LARGE SCALE GENOMIC DNA]</scope>
    <source>
        <strain>AKU_12601</strain>
    </source>
</reference>
<protein>
    <recommendedName>
        <fullName evidence="1">Potassium-transporting ATPase ATP-binding subunit</fullName>
        <ecNumber evidence="1">7.2.2.6</ecNumber>
    </recommendedName>
    <alternativeName>
        <fullName evidence="1">ATP phosphohydrolase [potassium-transporting] B chain</fullName>
    </alternativeName>
    <alternativeName>
        <fullName evidence="1">Potassium-binding and translocating subunit B</fullName>
    </alternativeName>
    <alternativeName>
        <fullName evidence="1">Potassium-translocating ATPase B chain</fullName>
    </alternativeName>
</protein>
<feature type="chain" id="PRO_1000114963" description="Potassium-transporting ATPase ATP-binding subunit">
    <location>
        <begin position="1"/>
        <end position="682"/>
    </location>
</feature>
<feature type="transmembrane region" description="Helical" evidence="1">
    <location>
        <begin position="34"/>
        <end position="54"/>
    </location>
</feature>
<feature type="transmembrane region" description="Helical" evidence="1">
    <location>
        <begin position="58"/>
        <end position="78"/>
    </location>
</feature>
<feature type="transmembrane region" description="Helical" evidence="1">
    <location>
        <begin position="219"/>
        <end position="239"/>
    </location>
</feature>
<feature type="transmembrane region" description="Helical" evidence="1">
    <location>
        <begin position="254"/>
        <end position="274"/>
    </location>
</feature>
<feature type="transmembrane region" description="Helical" evidence="1">
    <location>
        <begin position="588"/>
        <end position="608"/>
    </location>
</feature>
<feature type="transmembrane region" description="Helical" evidence="1">
    <location>
        <begin position="616"/>
        <end position="636"/>
    </location>
</feature>
<feature type="transmembrane region" description="Helical" evidence="1">
    <location>
        <begin position="662"/>
        <end position="682"/>
    </location>
</feature>
<feature type="active site" description="4-aspartylphosphate intermediate" evidence="1">
    <location>
        <position position="307"/>
    </location>
</feature>
<feature type="binding site" evidence="1">
    <location>
        <position position="344"/>
    </location>
    <ligand>
        <name>ATP</name>
        <dbReference type="ChEBI" id="CHEBI:30616"/>
    </ligand>
</feature>
<feature type="binding site" evidence="1">
    <location>
        <position position="348"/>
    </location>
    <ligand>
        <name>ATP</name>
        <dbReference type="ChEBI" id="CHEBI:30616"/>
    </ligand>
</feature>
<feature type="binding site" evidence="1">
    <location>
        <begin position="377"/>
        <end position="384"/>
    </location>
    <ligand>
        <name>ATP</name>
        <dbReference type="ChEBI" id="CHEBI:30616"/>
    </ligand>
</feature>
<feature type="binding site" evidence="1">
    <location>
        <position position="395"/>
    </location>
    <ligand>
        <name>ATP</name>
        <dbReference type="ChEBI" id="CHEBI:30616"/>
    </ligand>
</feature>
<feature type="binding site" evidence="1">
    <location>
        <position position="518"/>
    </location>
    <ligand>
        <name>Mg(2+)</name>
        <dbReference type="ChEBI" id="CHEBI:18420"/>
    </ligand>
</feature>
<feature type="binding site" evidence="1">
    <location>
        <position position="522"/>
    </location>
    <ligand>
        <name>Mg(2+)</name>
        <dbReference type="ChEBI" id="CHEBI:18420"/>
    </ligand>
</feature>
<sequence length="682" mass="72148">MSRKQLALFEPVLLVQALTDAVKKLSPRAQWRNPVMFVVWAGSVLTTLLTLAMVTGQIAGSALFTGVISLWLWFTVLFANFAEALAEGRSKAQANSLKGVKKTAFARRLRAPRHDAQADNVPAAELRKGDIVLVKAGDIIPCDGEVIEGGASVDESAITGESAPVIRESGGDFASVTGGTRILSDWLVIACSVNPGETFLDRMIAMVEGAQRRKTPNEIALTILLIALTIVFLLATATLWPFSAWGGNAVSVTVLVALLVCLIPTTIGGLLSAIGVAGMSRMLGANVIATSGRAVEAAGDVDVLLLDKTGTITLGNRQASDFIPARGVDERALADAAQLASLADETPEGRSIVILAKQRFNLRERDMQSLHATFVPFTAQSRMSGINIDNRMIRKGSVDAIRRHVESNGGHFPADVEQNVENVARLGATPLVVVEGARVLGVIALKDIVKGGIKERFAQLRKMGIKTVMITGDNRLTAAAIAAEAGVDDFLAEATPEAKLALIRQYQAEGRLVAMTGDGTNDAPALAQADVAVAMNSGTQAAKEAGNMVDLDSNPTKLIEVVHIGKQMLMTRGSLTTFSIANDVAKYFAIIPAAFAATYPQLNALNVMGLHSPNSAILSAVIFNALIIIFLIPLALKGVSYKPLSASAMLRRNLWIYGLGGLVVPFIGIKVIDVLLTLLGLA</sequence>
<name>KDPB_SALPK</name>
<proteinExistence type="inferred from homology"/>
<evidence type="ECO:0000255" key="1">
    <source>
        <dbReference type="HAMAP-Rule" id="MF_00285"/>
    </source>
</evidence>
<comment type="function">
    <text evidence="1">Part of the high-affinity ATP-driven potassium transport (or Kdp) system, which catalyzes the hydrolysis of ATP coupled with the electrogenic transport of potassium into the cytoplasm. This subunit is responsible for energy coupling to the transport system and for the release of the potassium ions to the cytoplasm.</text>
</comment>
<comment type="catalytic activity">
    <reaction evidence="1">
        <text>K(+)(out) + ATP + H2O = K(+)(in) + ADP + phosphate + H(+)</text>
        <dbReference type="Rhea" id="RHEA:16777"/>
        <dbReference type="ChEBI" id="CHEBI:15377"/>
        <dbReference type="ChEBI" id="CHEBI:15378"/>
        <dbReference type="ChEBI" id="CHEBI:29103"/>
        <dbReference type="ChEBI" id="CHEBI:30616"/>
        <dbReference type="ChEBI" id="CHEBI:43474"/>
        <dbReference type="ChEBI" id="CHEBI:456216"/>
        <dbReference type="EC" id="7.2.2.6"/>
    </reaction>
    <physiologicalReaction direction="left-to-right" evidence="1">
        <dbReference type="Rhea" id="RHEA:16778"/>
    </physiologicalReaction>
</comment>
<comment type="subunit">
    <text evidence="1">The system is composed of three essential subunits: KdpA, KdpB and KdpC.</text>
</comment>
<comment type="subcellular location">
    <subcellularLocation>
        <location evidence="1">Cell inner membrane</location>
        <topology evidence="1">Multi-pass membrane protein</topology>
    </subcellularLocation>
</comment>
<comment type="similarity">
    <text evidence="1">Belongs to the cation transport ATPase (P-type) (TC 3.A.3) family. Type IA subfamily.</text>
</comment>